<feature type="chain" id="PRO_0000075642" description="2-C-methyl-D-erythritol 4-phosphate cytidylyltransferase">
    <location>
        <begin position="1"/>
        <end position="232"/>
    </location>
</feature>
<feature type="site" description="Transition state stabilizer" evidence="1">
    <location>
        <position position="16"/>
    </location>
</feature>
<feature type="site" description="Transition state stabilizer" evidence="1">
    <location>
        <position position="23"/>
    </location>
</feature>
<feature type="site" description="Positions MEP for the nucleophilic attack" evidence="1">
    <location>
        <position position="155"/>
    </location>
</feature>
<feature type="site" description="Positions MEP for the nucleophilic attack" evidence="1">
    <location>
        <position position="211"/>
    </location>
</feature>
<name>ISPD_VIBCH</name>
<accession>Q9KUJ2</accession>
<evidence type="ECO:0000255" key="1">
    <source>
        <dbReference type="HAMAP-Rule" id="MF_00108"/>
    </source>
</evidence>
<organism>
    <name type="scientific">Vibrio cholerae serotype O1 (strain ATCC 39315 / El Tor Inaba N16961)</name>
    <dbReference type="NCBI Taxonomy" id="243277"/>
    <lineage>
        <taxon>Bacteria</taxon>
        <taxon>Pseudomonadati</taxon>
        <taxon>Pseudomonadota</taxon>
        <taxon>Gammaproteobacteria</taxon>
        <taxon>Vibrionales</taxon>
        <taxon>Vibrionaceae</taxon>
        <taxon>Vibrio</taxon>
    </lineage>
</organism>
<sequence length="232" mass="25902">MNNMTAIVPAAGVGSRMQADRPKQYLTLLDKTVLEHTVEHLLEHPLIEHVVVAVSADDPYFANLPLAHHPRVIRVDGGKERADSVLSALEYVCQHRLSEWVLVHDAARPCVTHADITQLITTALAHPIGAILASPVRDTMKRGDHLQQIVHTVDRTALWHALTPQMFRAQSLRERLFAALQQQVTITDEASAFEWRGEKPALVAGRADNLKITQPEDLALAEFYLSRNKEKS</sequence>
<gene>
    <name evidence="1" type="primary">ispD</name>
    <name type="ordered locus">VC_0528</name>
</gene>
<protein>
    <recommendedName>
        <fullName evidence="1">2-C-methyl-D-erythritol 4-phosphate cytidylyltransferase</fullName>
        <ecNumber evidence="1">2.7.7.60</ecNumber>
    </recommendedName>
    <alternativeName>
        <fullName evidence="1">4-diphosphocytidyl-2C-methyl-D-erythritol synthase</fullName>
    </alternativeName>
    <alternativeName>
        <fullName evidence="1">MEP cytidylyltransferase</fullName>
        <shortName evidence="1">MCT</shortName>
    </alternativeName>
</protein>
<proteinExistence type="inferred from homology"/>
<dbReference type="EC" id="2.7.7.60" evidence="1"/>
<dbReference type="EMBL" id="AE003852">
    <property type="protein sequence ID" value="AAF93696.1"/>
    <property type="molecule type" value="Genomic_DNA"/>
</dbReference>
<dbReference type="PIR" id="C82311">
    <property type="entry name" value="C82311"/>
</dbReference>
<dbReference type="RefSeq" id="NP_230179.1">
    <property type="nucleotide sequence ID" value="NC_002505.1"/>
</dbReference>
<dbReference type="RefSeq" id="WP_001061951.1">
    <property type="nucleotide sequence ID" value="NZ_LT906614.1"/>
</dbReference>
<dbReference type="SMR" id="Q9KUJ2"/>
<dbReference type="STRING" id="243277.VC_0528"/>
<dbReference type="DNASU" id="2615819"/>
<dbReference type="EnsemblBacteria" id="AAF93696">
    <property type="protein sequence ID" value="AAF93696"/>
    <property type="gene ID" value="VC_0528"/>
</dbReference>
<dbReference type="KEGG" id="vch:VC_0528"/>
<dbReference type="PATRIC" id="fig|243277.26.peg.504"/>
<dbReference type="eggNOG" id="COG1211">
    <property type="taxonomic scope" value="Bacteria"/>
</dbReference>
<dbReference type="HOGENOM" id="CLU_061281_3_1_6"/>
<dbReference type="UniPathway" id="UPA00056">
    <property type="reaction ID" value="UER00093"/>
</dbReference>
<dbReference type="Proteomes" id="UP000000584">
    <property type="component" value="Chromosome 1"/>
</dbReference>
<dbReference type="GO" id="GO:0050518">
    <property type="term" value="F:2-C-methyl-D-erythritol 4-phosphate cytidylyltransferase activity"/>
    <property type="evidence" value="ECO:0000318"/>
    <property type="project" value="GO_Central"/>
</dbReference>
<dbReference type="GO" id="GO:0019288">
    <property type="term" value="P:isopentenyl diphosphate biosynthetic process, methylerythritol 4-phosphate pathway"/>
    <property type="evidence" value="ECO:0007669"/>
    <property type="project" value="UniProtKB-UniRule"/>
</dbReference>
<dbReference type="CDD" id="cd02516">
    <property type="entry name" value="CDP-ME_synthetase"/>
    <property type="match status" value="1"/>
</dbReference>
<dbReference type="FunFam" id="3.90.550.10:FF:000003">
    <property type="entry name" value="2-C-methyl-D-erythritol 4-phosphate cytidylyltransferase"/>
    <property type="match status" value="1"/>
</dbReference>
<dbReference type="Gene3D" id="3.90.550.10">
    <property type="entry name" value="Spore Coat Polysaccharide Biosynthesis Protein SpsA, Chain A"/>
    <property type="match status" value="1"/>
</dbReference>
<dbReference type="HAMAP" id="MF_00108">
    <property type="entry name" value="IspD"/>
    <property type="match status" value="1"/>
</dbReference>
<dbReference type="InterPro" id="IPR001228">
    <property type="entry name" value="IspD"/>
</dbReference>
<dbReference type="InterPro" id="IPR034683">
    <property type="entry name" value="IspD/TarI"/>
</dbReference>
<dbReference type="InterPro" id="IPR050088">
    <property type="entry name" value="IspD/TarI_cytidylyltransf_bact"/>
</dbReference>
<dbReference type="InterPro" id="IPR018294">
    <property type="entry name" value="ISPD_synthase_CS"/>
</dbReference>
<dbReference type="InterPro" id="IPR029044">
    <property type="entry name" value="Nucleotide-diphossugar_trans"/>
</dbReference>
<dbReference type="NCBIfam" id="TIGR00453">
    <property type="entry name" value="ispD"/>
    <property type="match status" value="1"/>
</dbReference>
<dbReference type="PANTHER" id="PTHR32125">
    <property type="entry name" value="2-C-METHYL-D-ERYTHRITOL 4-PHOSPHATE CYTIDYLYLTRANSFERASE, CHLOROPLASTIC"/>
    <property type="match status" value="1"/>
</dbReference>
<dbReference type="PANTHER" id="PTHR32125:SF4">
    <property type="entry name" value="2-C-METHYL-D-ERYTHRITOL 4-PHOSPHATE CYTIDYLYLTRANSFERASE, CHLOROPLASTIC"/>
    <property type="match status" value="1"/>
</dbReference>
<dbReference type="Pfam" id="PF01128">
    <property type="entry name" value="IspD"/>
    <property type="match status" value="1"/>
</dbReference>
<dbReference type="SUPFAM" id="SSF53448">
    <property type="entry name" value="Nucleotide-diphospho-sugar transferases"/>
    <property type="match status" value="1"/>
</dbReference>
<dbReference type="PROSITE" id="PS01295">
    <property type="entry name" value="ISPD"/>
    <property type="match status" value="1"/>
</dbReference>
<keyword id="KW-0414">Isoprene biosynthesis</keyword>
<keyword id="KW-0548">Nucleotidyltransferase</keyword>
<keyword id="KW-1185">Reference proteome</keyword>
<keyword id="KW-0808">Transferase</keyword>
<comment type="function">
    <text evidence="1">Catalyzes the formation of 4-diphosphocytidyl-2-C-methyl-D-erythritol from CTP and 2-C-methyl-D-erythritol 4-phosphate (MEP).</text>
</comment>
<comment type="catalytic activity">
    <reaction evidence="1">
        <text>2-C-methyl-D-erythritol 4-phosphate + CTP + H(+) = 4-CDP-2-C-methyl-D-erythritol + diphosphate</text>
        <dbReference type="Rhea" id="RHEA:13429"/>
        <dbReference type="ChEBI" id="CHEBI:15378"/>
        <dbReference type="ChEBI" id="CHEBI:33019"/>
        <dbReference type="ChEBI" id="CHEBI:37563"/>
        <dbReference type="ChEBI" id="CHEBI:57823"/>
        <dbReference type="ChEBI" id="CHEBI:58262"/>
        <dbReference type="EC" id="2.7.7.60"/>
    </reaction>
</comment>
<comment type="pathway">
    <text evidence="1">Isoprenoid biosynthesis; isopentenyl diphosphate biosynthesis via DXP pathway; isopentenyl diphosphate from 1-deoxy-D-xylulose 5-phosphate: step 2/6.</text>
</comment>
<comment type="similarity">
    <text evidence="1">Belongs to the IspD/TarI cytidylyltransferase family. IspD subfamily.</text>
</comment>
<reference key="1">
    <citation type="journal article" date="2000" name="Nature">
        <title>DNA sequence of both chromosomes of the cholera pathogen Vibrio cholerae.</title>
        <authorList>
            <person name="Heidelberg J.F."/>
            <person name="Eisen J.A."/>
            <person name="Nelson W.C."/>
            <person name="Clayton R.A."/>
            <person name="Gwinn M.L."/>
            <person name="Dodson R.J."/>
            <person name="Haft D.H."/>
            <person name="Hickey E.K."/>
            <person name="Peterson J.D."/>
            <person name="Umayam L.A."/>
            <person name="Gill S.R."/>
            <person name="Nelson K.E."/>
            <person name="Read T.D."/>
            <person name="Tettelin H."/>
            <person name="Richardson D.L."/>
            <person name="Ermolaeva M.D."/>
            <person name="Vamathevan J.J."/>
            <person name="Bass S."/>
            <person name="Qin H."/>
            <person name="Dragoi I."/>
            <person name="Sellers P."/>
            <person name="McDonald L.A."/>
            <person name="Utterback T.R."/>
            <person name="Fleischmann R.D."/>
            <person name="Nierman W.C."/>
            <person name="White O."/>
            <person name="Salzberg S.L."/>
            <person name="Smith H.O."/>
            <person name="Colwell R.R."/>
            <person name="Mekalanos J.J."/>
            <person name="Venter J.C."/>
            <person name="Fraser C.M."/>
        </authorList>
    </citation>
    <scope>NUCLEOTIDE SEQUENCE [LARGE SCALE GENOMIC DNA]</scope>
    <source>
        <strain>ATCC 39315 / El Tor Inaba N16961</strain>
    </source>
</reference>